<dbReference type="EC" id="7.5.2.6" evidence="1"/>
<dbReference type="EMBL" id="AM039952">
    <property type="protein sequence ID" value="CAJ23931.1"/>
    <property type="molecule type" value="Genomic_DNA"/>
</dbReference>
<dbReference type="RefSeq" id="WP_011347456.1">
    <property type="nucleotide sequence ID" value="NZ_CP017190.1"/>
</dbReference>
<dbReference type="SMR" id="Q3BTC8"/>
<dbReference type="STRING" id="456327.BJD11_11120"/>
<dbReference type="GeneID" id="63991433"/>
<dbReference type="KEGG" id="xcv:XCV2254"/>
<dbReference type="eggNOG" id="COG1132">
    <property type="taxonomic scope" value="Bacteria"/>
</dbReference>
<dbReference type="HOGENOM" id="CLU_000604_84_3_6"/>
<dbReference type="Proteomes" id="UP000007069">
    <property type="component" value="Chromosome"/>
</dbReference>
<dbReference type="GO" id="GO:0005886">
    <property type="term" value="C:plasma membrane"/>
    <property type="evidence" value="ECO:0007669"/>
    <property type="project" value="UniProtKB-SubCell"/>
</dbReference>
<dbReference type="GO" id="GO:0015421">
    <property type="term" value="F:ABC-type oligopeptide transporter activity"/>
    <property type="evidence" value="ECO:0007669"/>
    <property type="project" value="TreeGrafter"/>
</dbReference>
<dbReference type="GO" id="GO:0005524">
    <property type="term" value="F:ATP binding"/>
    <property type="evidence" value="ECO:0007669"/>
    <property type="project" value="UniProtKB-KW"/>
</dbReference>
<dbReference type="GO" id="GO:0016887">
    <property type="term" value="F:ATP hydrolysis activity"/>
    <property type="evidence" value="ECO:0007669"/>
    <property type="project" value="InterPro"/>
</dbReference>
<dbReference type="GO" id="GO:0034040">
    <property type="term" value="F:ATPase-coupled lipid transmembrane transporter activity"/>
    <property type="evidence" value="ECO:0007669"/>
    <property type="project" value="InterPro"/>
</dbReference>
<dbReference type="CDD" id="cd18552">
    <property type="entry name" value="ABC_6TM_MsbA_like"/>
    <property type="match status" value="1"/>
</dbReference>
<dbReference type="FunFam" id="1.20.1560.10:FF:000103">
    <property type="entry name" value="Lipid A export ATP-binding/permease protein MsbA"/>
    <property type="match status" value="1"/>
</dbReference>
<dbReference type="FunFam" id="3.40.50.300:FF:000221">
    <property type="entry name" value="Multidrug ABC transporter ATP-binding protein"/>
    <property type="match status" value="1"/>
</dbReference>
<dbReference type="Gene3D" id="1.20.1560.10">
    <property type="entry name" value="ABC transporter type 1, transmembrane domain"/>
    <property type="match status" value="1"/>
</dbReference>
<dbReference type="Gene3D" id="3.40.50.300">
    <property type="entry name" value="P-loop containing nucleotide triphosphate hydrolases"/>
    <property type="match status" value="1"/>
</dbReference>
<dbReference type="InterPro" id="IPR003593">
    <property type="entry name" value="AAA+_ATPase"/>
</dbReference>
<dbReference type="InterPro" id="IPR011527">
    <property type="entry name" value="ABC1_TM_dom"/>
</dbReference>
<dbReference type="InterPro" id="IPR036640">
    <property type="entry name" value="ABC1_TM_sf"/>
</dbReference>
<dbReference type="InterPro" id="IPR003439">
    <property type="entry name" value="ABC_transporter-like_ATP-bd"/>
</dbReference>
<dbReference type="InterPro" id="IPR017871">
    <property type="entry name" value="ABC_transporter-like_CS"/>
</dbReference>
<dbReference type="InterPro" id="IPR011917">
    <property type="entry name" value="ABC_transpr_lipidA"/>
</dbReference>
<dbReference type="InterPro" id="IPR027417">
    <property type="entry name" value="P-loop_NTPase"/>
</dbReference>
<dbReference type="InterPro" id="IPR039421">
    <property type="entry name" value="Type_1_exporter"/>
</dbReference>
<dbReference type="NCBIfam" id="TIGR02203">
    <property type="entry name" value="MsbA_lipidA"/>
    <property type="match status" value="1"/>
</dbReference>
<dbReference type="PANTHER" id="PTHR43394:SF1">
    <property type="entry name" value="ATP-BINDING CASSETTE SUB-FAMILY B MEMBER 10, MITOCHONDRIAL"/>
    <property type="match status" value="1"/>
</dbReference>
<dbReference type="PANTHER" id="PTHR43394">
    <property type="entry name" value="ATP-DEPENDENT PERMEASE MDL1, MITOCHONDRIAL"/>
    <property type="match status" value="1"/>
</dbReference>
<dbReference type="Pfam" id="PF00664">
    <property type="entry name" value="ABC_membrane"/>
    <property type="match status" value="1"/>
</dbReference>
<dbReference type="Pfam" id="PF00005">
    <property type="entry name" value="ABC_tran"/>
    <property type="match status" value="1"/>
</dbReference>
<dbReference type="SMART" id="SM00382">
    <property type="entry name" value="AAA"/>
    <property type="match status" value="1"/>
</dbReference>
<dbReference type="SUPFAM" id="SSF90123">
    <property type="entry name" value="ABC transporter transmembrane region"/>
    <property type="match status" value="1"/>
</dbReference>
<dbReference type="SUPFAM" id="SSF52540">
    <property type="entry name" value="P-loop containing nucleoside triphosphate hydrolases"/>
    <property type="match status" value="1"/>
</dbReference>
<dbReference type="PROSITE" id="PS50929">
    <property type="entry name" value="ABC_TM1F"/>
    <property type="match status" value="1"/>
</dbReference>
<dbReference type="PROSITE" id="PS00211">
    <property type="entry name" value="ABC_TRANSPORTER_1"/>
    <property type="match status" value="1"/>
</dbReference>
<dbReference type="PROSITE" id="PS50893">
    <property type="entry name" value="ABC_TRANSPORTER_2"/>
    <property type="match status" value="1"/>
</dbReference>
<dbReference type="PROSITE" id="PS51239">
    <property type="entry name" value="MSBA"/>
    <property type="match status" value="1"/>
</dbReference>
<sequence>MTISTDRPAPVSSWRTYRRLLAFAKPYRLLLVAALIAALIEAAGTTGFLALMKPITDETFIYKNAEVSRWLPVQIILLFVVRGVAGYITDMAMGKSARSIARDLRIKVMAKYLRLPGSRFDSEPVPSMLIRLGSDSDQVAQAAVDAVKVMIQQSLQVIGALALMLWHSWQVTLTILVLAPVLAWVMDKVARRYRRISHSIQESGAQLLQAADQTLSSHQEVKIYGAQQTEMERYGALANRNLRLAMKVESTRGISTATVQMIGAIGLSALLFVAGAQALAGRLTAGDFVVLMTSMLTIIPGLKQLTNVQNMVQRGLASAERLFSVLDSPDEPDQGTVPLTRAKGLIEFRDVTARYPGQVNPALADVSFVAQPGTVTAIVGRSGSGKSSLIKLIPRFYEAEAGQILLDGHPVQAYALADLRRQIALVGQQVMLFDGSIADNVAFGEMRNADAGQLERAILGANAMEFVAQLPEGLQSHVGTKGGRLSGGQRQRLAIARAMLKDAPVLILDEATAALDNESERLVQDALHKLMPDRTTLVIAHRLSTIEHADQVLVMDQGRIVERGTHHQLLAQGGLYSHLHGMQFRERQA</sequence>
<comment type="function">
    <text evidence="1">Involved in lipopolysaccharide (LPS) biosynthesis. Translocates lipid A-core from the inner to the outer leaflet of the inner membrane. Transmembrane domains (TMD) form a pore in the inner membrane and the ATP-binding domain (NBD) is responsible for energy generation.</text>
</comment>
<comment type="catalytic activity">
    <reaction evidence="1">
        <text>ATP + H2O + lipid A-core oligosaccharideSide 1 = ADP + phosphate + lipid A-core oligosaccharideSide 2.</text>
        <dbReference type="EC" id="7.5.2.6"/>
    </reaction>
</comment>
<comment type="subunit">
    <text evidence="1">Homodimer.</text>
</comment>
<comment type="subcellular location">
    <subcellularLocation>
        <location evidence="1">Cell inner membrane</location>
        <topology evidence="1">Multi-pass membrane protein</topology>
    </subcellularLocation>
</comment>
<comment type="domain">
    <text evidence="1">In MsbA the ATP-binding domain (NBD) and the transmembrane domain (TMD) are fused.</text>
</comment>
<comment type="similarity">
    <text evidence="1">Belongs to the ABC transporter superfamily. Lipid exporter (TC 3.A.1.106) family.</text>
</comment>
<reference key="1">
    <citation type="journal article" date="2005" name="J. Bacteriol.">
        <title>Insights into genome plasticity and pathogenicity of the plant pathogenic Bacterium Xanthomonas campestris pv. vesicatoria revealed by the complete genome sequence.</title>
        <authorList>
            <person name="Thieme F."/>
            <person name="Koebnik R."/>
            <person name="Bekel T."/>
            <person name="Berger C."/>
            <person name="Boch J."/>
            <person name="Buettner D."/>
            <person name="Caldana C."/>
            <person name="Gaigalat L."/>
            <person name="Goesmann A."/>
            <person name="Kay S."/>
            <person name="Kirchner O."/>
            <person name="Lanz C."/>
            <person name="Linke B."/>
            <person name="McHardy A.C."/>
            <person name="Meyer F."/>
            <person name="Mittenhuber G."/>
            <person name="Nies D.H."/>
            <person name="Niesbach-Kloesgen U."/>
            <person name="Patschkowski T."/>
            <person name="Rueckert C."/>
            <person name="Rupp O."/>
            <person name="Schneiker S."/>
            <person name="Schuster S.C."/>
            <person name="Vorhoelter F.J."/>
            <person name="Weber E."/>
            <person name="Puehler A."/>
            <person name="Bonas U."/>
            <person name="Bartels D."/>
            <person name="Kaiser O."/>
        </authorList>
    </citation>
    <scope>NUCLEOTIDE SEQUENCE [LARGE SCALE GENOMIC DNA]</scope>
    <source>
        <strain>85-10</strain>
    </source>
</reference>
<evidence type="ECO:0000255" key="1">
    <source>
        <dbReference type="HAMAP-Rule" id="MF_01703"/>
    </source>
</evidence>
<feature type="chain" id="PRO_0000271665" description="ATP-dependent lipid A-core flippase">
    <location>
        <begin position="1"/>
        <end position="589"/>
    </location>
</feature>
<feature type="transmembrane region" description="Helical" evidence="1">
    <location>
        <begin position="29"/>
        <end position="49"/>
    </location>
</feature>
<feature type="transmembrane region" description="Helical" evidence="1">
    <location>
        <begin position="70"/>
        <end position="90"/>
    </location>
</feature>
<feature type="transmembrane region" description="Helical" evidence="1">
    <location>
        <begin position="157"/>
        <end position="177"/>
    </location>
</feature>
<feature type="transmembrane region" description="Helical" evidence="1">
    <location>
        <begin position="261"/>
        <end position="281"/>
    </location>
</feature>
<feature type="transmembrane region" description="Helical" evidence="1">
    <location>
        <begin position="283"/>
        <end position="303"/>
    </location>
</feature>
<feature type="domain" description="ABC transmembrane type-1" evidence="1">
    <location>
        <begin position="32"/>
        <end position="314"/>
    </location>
</feature>
<feature type="domain" description="ABC transporter" evidence="1">
    <location>
        <begin position="346"/>
        <end position="582"/>
    </location>
</feature>
<feature type="binding site" evidence="1">
    <location>
        <begin position="380"/>
        <end position="387"/>
    </location>
    <ligand>
        <name>ATP</name>
        <dbReference type="ChEBI" id="CHEBI:30616"/>
    </ligand>
</feature>
<organism>
    <name type="scientific">Xanthomonas euvesicatoria pv. vesicatoria (strain 85-10)</name>
    <name type="common">Xanthomonas campestris pv. vesicatoria</name>
    <dbReference type="NCBI Taxonomy" id="316273"/>
    <lineage>
        <taxon>Bacteria</taxon>
        <taxon>Pseudomonadati</taxon>
        <taxon>Pseudomonadota</taxon>
        <taxon>Gammaproteobacteria</taxon>
        <taxon>Lysobacterales</taxon>
        <taxon>Lysobacteraceae</taxon>
        <taxon>Xanthomonas</taxon>
    </lineage>
</organism>
<accession>Q3BTC8</accession>
<gene>
    <name evidence="1" type="primary">msbA</name>
    <name type="ordered locus">XCV2254</name>
</gene>
<proteinExistence type="inferred from homology"/>
<protein>
    <recommendedName>
        <fullName evidence="1">ATP-dependent lipid A-core flippase</fullName>
        <ecNumber evidence="1">7.5.2.6</ecNumber>
    </recommendedName>
    <alternativeName>
        <fullName evidence="1">Lipid A export ATP-binding/permease protein MsbA</fullName>
    </alternativeName>
</protein>
<name>MSBA_XANE5</name>
<keyword id="KW-0067">ATP-binding</keyword>
<keyword id="KW-0997">Cell inner membrane</keyword>
<keyword id="KW-1003">Cell membrane</keyword>
<keyword id="KW-0445">Lipid transport</keyword>
<keyword id="KW-0472">Membrane</keyword>
<keyword id="KW-0547">Nucleotide-binding</keyword>
<keyword id="KW-1278">Translocase</keyword>
<keyword id="KW-0812">Transmembrane</keyword>
<keyword id="KW-1133">Transmembrane helix</keyword>
<keyword id="KW-0813">Transport</keyword>